<dbReference type="EC" id="3.2.2.27" evidence="1"/>
<dbReference type="EMBL" id="CP000705">
    <property type="protein sequence ID" value="ABQ82666.1"/>
    <property type="molecule type" value="Genomic_DNA"/>
</dbReference>
<dbReference type="RefSeq" id="WP_003676241.1">
    <property type="nucleotide sequence ID" value="NZ_AZDD01000021.1"/>
</dbReference>
<dbReference type="SMR" id="A5VIJ2"/>
<dbReference type="STRING" id="557436.Lreu_0397"/>
<dbReference type="KEGG" id="lre:Lreu_0397"/>
<dbReference type="PATRIC" id="fig|557436.17.peg.825"/>
<dbReference type="eggNOG" id="COG0692">
    <property type="taxonomic scope" value="Bacteria"/>
</dbReference>
<dbReference type="HOGENOM" id="CLU_032162_3_0_9"/>
<dbReference type="Proteomes" id="UP000001991">
    <property type="component" value="Chromosome"/>
</dbReference>
<dbReference type="GO" id="GO:0005737">
    <property type="term" value="C:cytoplasm"/>
    <property type="evidence" value="ECO:0007669"/>
    <property type="project" value="UniProtKB-SubCell"/>
</dbReference>
<dbReference type="GO" id="GO:0004844">
    <property type="term" value="F:uracil DNA N-glycosylase activity"/>
    <property type="evidence" value="ECO:0007669"/>
    <property type="project" value="UniProtKB-UniRule"/>
</dbReference>
<dbReference type="GO" id="GO:0097510">
    <property type="term" value="P:base-excision repair, AP site formation via deaminated base removal"/>
    <property type="evidence" value="ECO:0007669"/>
    <property type="project" value="TreeGrafter"/>
</dbReference>
<dbReference type="CDD" id="cd10027">
    <property type="entry name" value="UDG-F1-like"/>
    <property type="match status" value="1"/>
</dbReference>
<dbReference type="FunFam" id="3.40.470.10:FF:000001">
    <property type="entry name" value="Uracil-DNA glycosylase"/>
    <property type="match status" value="1"/>
</dbReference>
<dbReference type="Gene3D" id="3.40.470.10">
    <property type="entry name" value="Uracil-DNA glycosylase-like domain"/>
    <property type="match status" value="1"/>
</dbReference>
<dbReference type="HAMAP" id="MF_00148">
    <property type="entry name" value="UDG"/>
    <property type="match status" value="1"/>
</dbReference>
<dbReference type="InterPro" id="IPR002043">
    <property type="entry name" value="UDG_fam1"/>
</dbReference>
<dbReference type="InterPro" id="IPR018085">
    <property type="entry name" value="Ura-DNA_Glyclase_AS"/>
</dbReference>
<dbReference type="InterPro" id="IPR005122">
    <property type="entry name" value="Uracil-DNA_glycosylase-like"/>
</dbReference>
<dbReference type="InterPro" id="IPR036895">
    <property type="entry name" value="Uracil-DNA_glycosylase-like_sf"/>
</dbReference>
<dbReference type="NCBIfam" id="NF003588">
    <property type="entry name" value="PRK05254.1-1"/>
    <property type="match status" value="1"/>
</dbReference>
<dbReference type="NCBIfam" id="NF003589">
    <property type="entry name" value="PRK05254.1-2"/>
    <property type="match status" value="1"/>
</dbReference>
<dbReference type="NCBIfam" id="NF003591">
    <property type="entry name" value="PRK05254.1-4"/>
    <property type="match status" value="1"/>
</dbReference>
<dbReference type="NCBIfam" id="NF003592">
    <property type="entry name" value="PRK05254.1-5"/>
    <property type="match status" value="1"/>
</dbReference>
<dbReference type="NCBIfam" id="TIGR00628">
    <property type="entry name" value="ung"/>
    <property type="match status" value="1"/>
</dbReference>
<dbReference type="PANTHER" id="PTHR11264">
    <property type="entry name" value="URACIL-DNA GLYCOSYLASE"/>
    <property type="match status" value="1"/>
</dbReference>
<dbReference type="PANTHER" id="PTHR11264:SF0">
    <property type="entry name" value="URACIL-DNA GLYCOSYLASE"/>
    <property type="match status" value="1"/>
</dbReference>
<dbReference type="Pfam" id="PF03167">
    <property type="entry name" value="UDG"/>
    <property type="match status" value="1"/>
</dbReference>
<dbReference type="SMART" id="SM00986">
    <property type="entry name" value="UDG"/>
    <property type="match status" value="1"/>
</dbReference>
<dbReference type="SMART" id="SM00987">
    <property type="entry name" value="UreE_C"/>
    <property type="match status" value="1"/>
</dbReference>
<dbReference type="SUPFAM" id="SSF52141">
    <property type="entry name" value="Uracil-DNA glycosylase-like"/>
    <property type="match status" value="1"/>
</dbReference>
<dbReference type="PROSITE" id="PS00130">
    <property type="entry name" value="U_DNA_GLYCOSYLASE"/>
    <property type="match status" value="1"/>
</dbReference>
<name>UNG_LIMRD</name>
<gene>
    <name evidence="1" type="primary">ung</name>
    <name type="ordered locus">Lreu_0397</name>
</gene>
<reference key="1">
    <citation type="journal article" date="2011" name="PLoS Genet.">
        <title>The evolution of host specialization in the vertebrate gut symbiont Lactobacillus reuteri.</title>
        <authorList>
            <person name="Frese S.A."/>
            <person name="Benson A.K."/>
            <person name="Tannock G.W."/>
            <person name="Loach D.M."/>
            <person name="Kim J."/>
            <person name="Zhang M."/>
            <person name="Oh P.L."/>
            <person name="Heng N.C."/>
            <person name="Patil P.B."/>
            <person name="Juge N."/>
            <person name="Mackenzie D.A."/>
            <person name="Pearson B.M."/>
            <person name="Lapidus A."/>
            <person name="Dalin E."/>
            <person name="Tice H."/>
            <person name="Goltsman E."/>
            <person name="Land M."/>
            <person name="Hauser L."/>
            <person name="Ivanova N."/>
            <person name="Kyrpides N.C."/>
            <person name="Walter J."/>
        </authorList>
    </citation>
    <scope>NUCLEOTIDE SEQUENCE [LARGE SCALE GENOMIC DNA]</scope>
    <source>
        <strain>DSM 20016</strain>
    </source>
</reference>
<proteinExistence type="inferred from homology"/>
<organism>
    <name type="scientific">Limosilactobacillus reuteri (strain DSM 20016)</name>
    <name type="common">Lactobacillus reuteri</name>
    <dbReference type="NCBI Taxonomy" id="557436"/>
    <lineage>
        <taxon>Bacteria</taxon>
        <taxon>Bacillati</taxon>
        <taxon>Bacillota</taxon>
        <taxon>Bacilli</taxon>
        <taxon>Lactobacillales</taxon>
        <taxon>Lactobacillaceae</taxon>
        <taxon>Limosilactobacillus</taxon>
    </lineage>
</organism>
<comment type="function">
    <text evidence="1">Excises uracil residues from the DNA which can arise as a result of misincorporation of dUMP residues by DNA polymerase or due to deamination of cytosine.</text>
</comment>
<comment type="catalytic activity">
    <reaction evidence="1">
        <text>Hydrolyzes single-stranded DNA or mismatched double-stranded DNA and polynucleotides, releasing free uracil.</text>
        <dbReference type="EC" id="3.2.2.27"/>
    </reaction>
</comment>
<comment type="subcellular location">
    <subcellularLocation>
        <location evidence="1">Cytoplasm</location>
    </subcellularLocation>
</comment>
<comment type="similarity">
    <text evidence="1">Belongs to the uracil-DNA glycosylase (UDG) superfamily. UNG family.</text>
</comment>
<sequence length="229" mass="26106">MKQLIHNDWWEVLKPQFESAYYAQLHNFLKEEYTHQTIYPEMHHIFEAFEWTPFSKVKVVILGQDPYHGPNQAHGCSFSVLPGVPVPPSLQNIYKELQSDLGCTPVNHGYLKKWADQGVLLLNSVLTVRAGQAYSHRGHGWEQLTDAAIHALSERPKPVVFILWGRAARNKKQLINTKTNIVLESAHPSPLSANRGFFGSRPFSKTNEALQAMGEQPIDWQLPAEPNYR</sequence>
<evidence type="ECO:0000255" key="1">
    <source>
        <dbReference type="HAMAP-Rule" id="MF_00148"/>
    </source>
</evidence>
<feature type="chain" id="PRO_1000058129" description="Uracil-DNA glycosylase">
    <location>
        <begin position="1"/>
        <end position="229"/>
    </location>
</feature>
<feature type="active site" description="Proton acceptor" evidence="1">
    <location>
        <position position="65"/>
    </location>
</feature>
<protein>
    <recommendedName>
        <fullName evidence="1">Uracil-DNA glycosylase</fullName>
        <shortName evidence="1">UDG</shortName>
        <ecNumber evidence="1">3.2.2.27</ecNumber>
    </recommendedName>
</protein>
<keyword id="KW-0963">Cytoplasm</keyword>
<keyword id="KW-0227">DNA damage</keyword>
<keyword id="KW-0234">DNA repair</keyword>
<keyword id="KW-0378">Hydrolase</keyword>
<keyword id="KW-1185">Reference proteome</keyword>
<accession>A5VIJ2</accession>